<dbReference type="EC" id="1.8.1.9" evidence="3"/>
<dbReference type="EMBL" id="U00059">
    <property type="protein sequence ID" value="AAB68856.1"/>
    <property type="molecule type" value="Genomic_DNA"/>
</dbReference>
<dbReference type="EMBL" id="AY557882">
    <property type="protein sequence ID" value="AAS56208.1"/>
    <property type="molecule type" value="Genomic_DNA"/>
</dbReference>
<dbReference type="EMBL" id="BK006934">
    <property type="protein sequence ID" value="DAA06800.1"/>
    <property type="molecule type" value="Genomic_DNA"/>
</dbReference>
<dbReference type="PIR" id="S48948">
    <property type="entry name" value="S48948"/>
</dbReference>
<dbReference type="RefSeq" id="NP_011974.1">
    <property type="nucleotide sequence ID" value="NM_001179236.1"/>
</dbReference>
<dbReference type="SMR" id="P38816"/>
<dbReference type="BioGRID" id="36539">
    <property type="interactions" value="54"/>
</dbReference>
<dbReference type="DIP" id="DIP-1942N"/>
<dbReference type="FunCoup" id="P38816">
    <property type="interactions" value="140"/>
</dbReference>
<dbReference type="IntAct" id="P38816">
    <property type="interactions" value="2"/>
</dbReference>
<dbReference type="MINT" id="P38816"/>
<dbReference type="STRING" id="4932.YHR106W"/>
<dbReference type="iPTMnet" id="P38816"/>
<dbReference type="PaxDb" id="4932-YHR106W"/>
<dbReference type="PeptideAtlas" id="P38816"/>
<dbReference type="EnsemblFungi" id="YHR106W_mRNA">
    <property type="protein sequence ID" value="YHR106W"/>
    <property type="gene ID" value="YHR106W"/>
</dbReference>
<dbReference type="GeneID" id="856506"/>
<dbReference type="KEGG" id="sce:YHR106W"/>
<dbReference type="AGR" id="SGD:S000001148"/>
<dbReference type="SGD" id="S000001148">
    <property type="gene designation" value="TRR2"/>
</dbReference>
<dbReference type="VEuPathDB" id="FungiDB:YHR106W"/>
<dbReference type="eggNOG" id="KOG0404">
    <property type="taxonomic scope" value="Eukaryota"/>
</dbReference>
<dbReference type="GeneTree" id="ENSGT00940000176591"/>
<dbReference type="HOGENOM" id="CLU_031864_5_1_1"/>
<dbReference type="InParanoid" id="P38816"/>
<dbReference type="OMA" id="ANKFYWI"/>
<dbReference type="OrthoDB" id="371245at2759"/>
<dbReference type="BioCyc" id="YEAST:YHR106W-MONOMER"/>
<dbReference type="BioGRID-ORCS" id="856506">
    <property type="hits" value="7 hits in 10 CRISPR screens"/>
</dbReference>
<dbReference type="PRO" id="PR:P38816"/>
<dbReference type="Proteomes" id="UP000002311">
    <property type="component" value="Chromosome VIII"/>
</dbReference>
<dbReference type="RNAct" id="P38816">
    <property type="molecule type" value="protein"/>
</dbReference>
<dbReference type="GO" id="GO:0005829">
    <property type="term" value="C:cytosol"/>
    <property type="evidence" value="ECO:0000318"/>
    <property type="project" value="GO_Central"/>
</dbReference>
<dbReference type="GO" id="GO:0005739">
    <property type="term" value="C:mitochondrion"/>
    <property type="evidence" value="ECO:0000314"/>
    <property type="project" value="SGD"/>
</dbReference>
<dbReference type="GO" id="GO:0004791">
    <property type="term" value="F:thioredoxin-disulfide reductase (NADPH) activity"/>
    <property type="evidence" value="ECO:0000314"/>
    <property type="project" value="SGD"/>
</dbReference>
<dbReference type="GO" id="GO:0045454">
    <property type="term" value="P:cell redox homeostasis"/>
    <property type="evidence" value="ECO:0000318"/>
    <property type="project" value="GO_Central"/>
</dbReference>
<dbReference type="GO" id="GO:0034599">
    <property type="term" value="P:cellular response to oxidative stress"/>
    <property type="evidence" value="ECO:0000315"/>
    <property type="project" value="SGD"/>
</dbReference>
<dbReference type="GO" id="GO:0019430">
    <property type="term" value="P:removal of superoxide radicals"/>
    <property type="evidence" value="ECO:0007669"/>
    <property type="project" value="InterPro"/>
</dbReference>
<dbReference type="FunFam" id="3.50.50.60:FF:000064">
    <property type="entry name" value="Thioredoxin reductase"/>
    <property type="match status" value="1"/>
</dbReference>
<dbReference type="Gene3D" id="3.50.50.60">
    <property type="entry name" value="FAD/NAD(P)-binding domain"/>
    <property type="match status" value="2"/>
</dbReference>
<dbReference type="InterPro" id="IPR036188">
    <property type="entry name" value="FAD/NAD-bd_sf"/>
</dbReference>
<dbReference type="InterPro" id="IPR023753">
    <property type="entry name" value="FAD/NAD-binding_dom"/>
</dbReference>
<dbReference type="InterPro" id="IPR050097">
    <property type="entry name" value="Ferredoxin-NADP_redctase_2"/>
</dbReference>
<dbReference type="InterPro" id="IPR008255">
    <property type="entry name" value="Pyr_nucl-diS_OxRdtase_2_AS"/>
</dbReference>
<dbReference type="InterPro" id="IPR005982">
    <property type="entry name" value="Thioredox_Rdtase"/>
</dbReference>
<dbReference type="NCBIfam" id="TIGR01292">
    <property type="entry name" value="TRX_reduct"/>
    <property type="match status" value="1"/>
</dbReference>
<dbReference type="PANTHER" id="PTHR48105">
    <property type="entry name" value="THIOREDOXIN REDUCTASE 1-RELATED-RELATED"/>
    <property type="match status" value="1"/>
</dbReference>
<dbReference type="Pfam" id="PF07992">
    <property type="entry name" value="Pyr_redox_2"/>
    <property type="match status" value="1"/>
</dbReference>
<dbReference type="PRINTS" id="PR00368">
    <property type="entry name" value="FADPNR"/>
</dbReference>
<dbReference type="PRINTS" id="PR00469">
    <property type="entry name" value="PNDRDTASEII"/>
</dbReference>
<dbReference type="SUPFAM" id="SSF51905">
    <property type="entry name" value="FAD/NAD(P)-binding domain"/>
    <property type="match status" value="1"/>
</dbReference>
<dbReference type="PROSITE" id="PS00573">
    <property type="entry name" value="PYRIDINE_REDOX_2"/>
    <property type="match status" value="1"/>
</dbReference>
<gene>
    <name evidence="6" type="primary">TRR2</name>
    <name type="ordered locus">YHR106W</name>
</gene>
<proteinExistence type="evidence at protein level"/>
<protein>
    <recommendedName>
        <fullName evidence="6">Thioredoxin reductase 2, mitochondrial</fullName>
        <ecNumber evidence="3">1.8.1.9</ecNumber>
    </recommendedName>
</protein>
<feature type="transit peptide" description="Mitochondrion" evidence="2">
    <location>
        <begin position="1"/>
        <end position="23"/>
    </location>
</feature>
<feature type="chain" id="PRO_0000030303" description="Thioredoxin reductase 2, mitochondrial">
    <location>
        <begin position="24"/>
        <end position="342"/>
    </location>
</feature>
<feature type="binding site" evidence="1">
    <location>
        <begin position="34"/>
        <end position="37"/>
    </location>
    <ligand>
        <name>FAD</name>
        <dbReference type="ChEBI" id="CHEBI:57692"/>
    </ligand>
</feature>
<feature type="binding site" evidence="1">
    <location>
        <begin position="56"/>
        <end position="68"/>
    </location>
    <ligand>
        <name>FAD</name>
        <dbReference type="ChEBI" id="CHEBI:57692"/>
    </ligand>
</feature>
<feature type="binding site" evidence="1">
    <location>
        <begin position="63"/>
        <end position="64"/>
    </location>
    <ligand>
        <name>FAD</name>
        <dbReference type="ChEBI" id="CHEBI:57692"/>
    </ligand>
</feature>
<feature type="binding site" evidence="1">
    <location>
        <position position="68"/>
    </location>
    <ligand>
        <name>FAD</name>
        <dbReference type="ChEBI" id="CHEBI:57692"/>
    </ligand>
</feature>
<feature type="binding site" evidence="1">
    <location>
        <position position="77"/>
    </location>
    <ligand>
        <name>FAD</name>
        <dbReference type="ChEBI" id="CHEBI:57692"/>
    </ligand>
</feature>
<feature type="binding site" evidence="1">
    <location>
        <position position="110"/>
    </location>
    <ligand>
        <name>FAD</name>
        <dbReference type="ChEBI" id="CHEBI:57692"/>
    </ligand>
</feature>
<feature type="binding site" evidence="1">
    <location>
        <position position="168"/>
    </location>
    <ligand>
        <name>FAD</name>
        <dbReference type="ChEBI" id="CHEBI:57692"/>
    </ligand>
</feature>
<feature type="binding site" evidence="1">
    <location>
        <begin position="311"/>
        <end position="320"/>
    </location>
    <ligand>
        <name>FAD</name>
        <dbReference type="ChEBI" id="CHEBI:57692"/>
    </ligand>
</feature>
<feature type="binding site" evidence="1">
    <location>
        <position position="311"/>
    </location>
    <ligand>
        <name>FAD</name>
        <dbReference type="ChEBI" id="CHEBI:57692"/>
    </ligand>
</feature>
<feature type="binding site" evidence="1">
    <location>
        <begin position="318"/>
        <end position="320"/>
    </location>
    <ligand>
        <name>FAD</name>
        <dbReference type="ChEBI" id="CHEBI:57692"/>
    </ligand>
</feature>
<feature type="disulfide bond" description="Redox-active" evidence="1">
    <location>
        <begin position="165"/>
        <end position="168"/>
    </location>
</feature>
<accession>P38816</accession>
<accession>D3DL56</accession>
<organism>
    <name type="scientific">Saccharomyces cerevisiae (strain ATCC 204508 / S288c)</name>
    <name type="common">Baker's yeast</name>
    <dbReference type="NCBI Taxonomy" id="559292"/>
    <lineage>
        <taxon>Eukaryota</taxon>
        <taxon>Fungi</taxon>
        <taxon>Dikarya</taxon>
        <taxon>Ascomycota</taxon>
        <taxon>Saccharomycotina</taxon>
        <taxon>Saccharomycetes</taxon>
        <taxon>Saccharomycetales</taxon>
        <taxon>Saccharomycetaceae</taxon>
        <taxon>Saccharomyces</taxon>
    </lineage>
</organism>
<sequence>MIKHIVSPFRTNFVGISKSVLSRMIHHKVTIIGSGPAAHTAAIYLARAEMKPTLYEGMMANGIAAGGQLTTTTDIENFPGFPESLSGSELMERMRKQSAKFGTNIITETVSKVDLSSKPFRLWTEFNEDAEPVTTDAIILATGASAKRMHLPGEETYWQQGISACAVCDGAVPIFRNKPLAVIGGGDSACEEAEFLTKYASKVYILVRKDHFRASVIMQRRIEKNPNIIVLFNTVALEAKGDGKLLNMLRIKNTKSNVENDLEVNGLFYAIGHSPATDIVKGQVDEEETGYIKTVPGSSLTSVPGFFAAGDVQDSRYRQAVTSAGSGCIAALDAERYLSAQE</sequence>
<name>TRXB2_YEAST</name>
<comment type="function">
    <text evidence="3">Acts on mitochondrial thioredoxin 3. Implicated in the defense against oxidative stress.</text>
</comment>
<comment type="catalytic activity">
    <reaction evidence="3">
        <text>[thioredoxin]-dithiol + NADP(+) = [thioredoxin]-disulfide + NADPH + H(+)</text>
        <dbReference type="Rhea" id="RHEA:20345"/>
        <dbReference type="Rhea" id="RHEA-COMP:10698"/>
        <dbReference type="Rhea" id="RHEA-COMP:10700"/>
        <dbReference type="ChEBI" id="CHEBI:15378"/>
        <dbReference type="ChEBI" id="CHEBI:29950"/>
        <dbReference type="ChEBI" id="CHEBI:50058"/>
        <dbReference type="ChEBI" id="CHEBI:57783"/>
        <dbReference type="ChEBI" id="CHEBI:58349"/>
        <dbReference type="EC" id="1.8.1.9"/>
    </reaction>
</comment>
<comment type="cofactor">
    <cofactor evidence="1">
        <name>FAD</name>
        <dbReference type="ChEBI" id="CHEBI:57692"/>
    </cofactor>
    <text evidence="1">Binds 1 FAD per subunit.</text>
</comment>
<comment type="subunit">
    <text evidence="3">Homodimer.</text>
</comment>
<comment type="interaction">
    <interactant intactId="EBI-19502">
        <id>P38816</id>
    </interactant>
    <interactant intactId="EBI-19497">
        <id>P29509</id>
        <label>TRR1</label>
    </interactant>
    <organismsDiffer>false</organismsDiffer>
    <experiments>5</experiments>
</comment>
<comment type="subcellular location">
    <subcellularLocation>
        <location evidence="3 5">Mitochondrion</location>
    </subcellularLocation>
</comment>
<comment type="miscellaneous">
    <text evidence="4">Present with 414 molecules/cell in log phase SD medium.</text>
</comment>
<comment type="similarity">
    <text evidence="7">Belongs to the class-II pyridine nucleotide-disulfide oxidoreductase family.</text>
</comment>
<evidence type="ECO:0000250" key="1">
    <source>
        <dbReference type="UniProtKB" id="P29509"/>
    </source>
</evidence>
<evidence type="ECO:0000255" key="2"/>
<evidence type="ECO:0000269" key="3">
    <source>
    </source>
</evidence>
<evidence type="ECO:0000269" key="4">
    <source>
    </source>
</evidence>
<evidence type="ECO:0000269" key="5">
    <source>
    </source>
</evidence>
<evidence type="ECO:0000303" key="6">
    <source>
    </source>
</evidence>
<evidence type="ECO:0000305" key="7"/>
<reference key="1">
    <citation type="journal article" date="1994" name="Science">
        <title>Complete nucleotide sequence of Saccharomyces cerevisiae chromosome VIII.</title>
        <authorList>
            <person name="Johnston M."/>
            <person name="Andrews S."/>
            <person name="Brinkman R."/>
            <person name="Cooper J."/>
            <person name="Ding H."/>
            <person name="Dover J."/>
            <person name="Du Z."/>
            <person name="Favello A."/>
            <person name="Fulton L."/>
            <person name="Gattung S."/>
            <person name="Geisel C."/>
            <person name="Kirsten J."/>
            <person name="Kucaba T."/>
            <person name="Hillier L.W."/>
            <person name="Jier M."/>
            <person name="Johnston L."/>
            <person name="Langston Y."/>
            <person name="Latreille P."/>
            <person name="Louis E.J."/>
            <person name="Macri C."/>
            <person name="Mardis E."/>
            <person name="Menezes S."/>
            <person name="Mouser L."/>
            <person name="Nhan M."/>
            <person name="Rifkin L."/>
            <person name="Riles L."/>
            <person name="St Peter H."/>
            <person name="Trevaskis E."/>
            <person name="Vaughan K."/>
            <person name="Vignati D."/>
            <person name="Wilcox L."/>
            <person name="Wohldman P."/>
            <person name="Waterston R."/>
            <person name="Wilson R."/>
            <person name="Vaudin M."/>
        </authorList>
    </citation>
    <scope>NUCLEOTIDE SEQUENCE [LARGE SCALE GENOMIC DNA]</scope>
    <source>
        <strain>ATCC 204508 / S288c</strain>
    </source>
</reference>
<reference key="2">
    <citation type="journal article" date="2014" name="G3 (Bethesda)">
        <title>The reference genome sequence of Saccharomyces cerevisiae: Then and now.</title>
        <authorList>
            <person name="Engel S.R."/>
            <person name="Dietrich F.S."/>
            <person name="Fisk D.G."/>
            <person name="Binkley G."/>
            <person name="Balakrishnan R."/>
            <person name="Costanzo M.C."/>
            <person name="Dwight S.S."/>
            <person name="Hitz B.C."/>
            <person name="Karra K."/>
            <person name="Nash R.S."/>
            <person name="Weng S."/>
            <person name="Wong E.D."/>
            <person name="Lloyd P."/>
            <person name="Skrzypek M.S."/>
            <person name="Miyasato S.R."/>
            <person name="Simison M."/>
            <person name="Cherry J.M."/>
        </authorList>
    </citation>
    <scope>GENOME REANNOTATION</scope>
    <source>
        <strain>ATCC 204508 / S288c</strain>
    </source>
</reference>
<reference key="3">
    <citation type="journal article" date="2007" name="Genome Res.">
        <title>Approaching a complete repository of sequence-verified protein-encoding clones for Saccharomyces cerevisiae.</title>
        <authorList>
            <person name="Hu Y."/>
            <person name="Rolfs A."/>
            <person name="Bhullar B."/>
            <person name="Murthy T.V.S."/>
            <person name="Zhu C."/>
            <person name="Berger M.F."/>
            <person name="Camargo A.A."/>
            <person name="Kelley F."/>
            <person name="McCarron S."/>
            <person name="Jepson D."/>
            <person name="Richardson A."/>
            <person name="Raphael J."/>
            <person name="Moreira D."/>
            <person name="Taycher E."/>
            <person name="Zuo D."/>
            <person name="Mohr S."/>
            <person name="Kane M.F."/>
            <person name="Williamson J."/>
            <person name="Simpson A.J.G."/>
            <person name="Bulyk M.L."/>
            <person name="Harlow E."/>
            <person name="Marsischky G."/>
            <person name="Kolodner R.D."/>
            <person name="LaBaer J."/>
        </authorList>
    </citation>
    <scope>NUCLEOTIDE SEQUENCE [GENOMIC DNA]</scope>
    <source>
        <strain>ATCC 204508 / S288c</strain>
    </source>
</reference>
<reference key="4">
    <citation type="journal article" date="1999" name="J. Biol. Chem.">
        <title>Identification and functional characterization of a novel mitochondrial thioredoxin system in Saccharomyces cerevisiae.</title>
        <authorList>
            <person name="Pedrajas J.R."/>
            <person name="Kosmidou E."/>
            <person name="Miranda-Vizuete A."/>
            <person name="Gustafsson J.-A."/>
            <person name="Wright A.P.H."/>
            <person name="Spyrou G."/>
        </authorList>
    </citation>
    <scope>FUNCTION</scope>
    <scope>CATALYTIC ACTIVITY</scope>
    <scope>SUBCELLULAR LOCATION</scope>
    <scope>SUBUNIT</scope>
</reference>
<reference key="5">
    <citation type="journal article" date="2003" name="Nature">
        <title>Global analysis of protein expression in yeast.</title>
        <authorList>
            <person name="Ghaemmaghami S."/>
            <person name="Huh W.-K."/>
            <person name="Bower K."/>
            <person name="Howson R.W."/>
            <person name="Belle A."/>
            <person name="Dephoure N."/>
            <person name="O'Shea E.K."/>
            <person name="Weissman J.S."/>
        </authorList>
    </citation>
    <scope>LEVEL OF PROTEIN EXPRESSION [LARGE SCALE ANALYSIS]</scope>
</reference>
<reference key="6">
    <citation type="journal article" date="2006" name="J. Proteome Res.">
        <title>Toward the complete yeast mitochondrial proteome: multidimensional separation techniques for mitochondrial proteomics.</title>
        <authorList>
            <person name="Reinders J."/>
            <person name="Zahedi R.P."/>
            <person name="Pfanner N."/>
            <person name="Meisinger C."/>
            <person name="Sickmann A."/>
        </authorList>
    </citation>
    <scope>SUBCELLULAR LOCATION [LARGE SCALE ANALYSIS]</scope>
    <scope>IDENTIFICATION BY MASS SPECTROMETRY</scope>
</reference>
<keyword id="KW-1015">Disulfide bond</keyword>
<keyword id="KW-0274">FAD</keyword>
<keyword id="KW-0285">Flavoprotein</keyword>
<keyword id="KW-0496">Mitochondrion</keyword>
<keyword id="KW-0521">NADP</keyword>
<keyword id="KW-0560">Oxidoreductase</keyword>
<keyword id="KW-0676">Redox-active center</keyword>
<keyword id="KW-1185">Reference proteome</keyword>
<keyword id="KW-0809">Transit peptide</keyword>